<evidence type="ECO:0000255" key="1">
    <source>
        <dbReference type="HAMAP-Rule" id="MF_00444"/>
    </source>
</evidence>
<reference key="1">
    <citation type="journal article" date="2007" name="PLoS ONE">
        <title>Genome sequencing shows that European isolates of Francisella tularensis subspecies tularensis are almost identical to US laboratory strain Schu S4.</title>
        <authorList>
            <person name="Chaudhuri R.R."/>
            <person name="Ren C.-P."/>
            <person name="Desmond L."/>
            <person name="Vincent G.A."/>
            <person name="Silman N.J."/>
            <person name="Brehm J.K."/>
            <person name="Elmore M.J."/>
            <person name="Hudson M.J."/>
            <person name="Forsman M."/>
            <person name="Isherwood K.E."/>
            <person name="Gurycova D."/>
            <person name="Minton N.P."/>
            <person name="Titball R.W."/>
            <person name="Pallen M.J."/>
            <person name="Vipond R."/>
        </authorList>
    </citation>
    <scope>NUCLEOTIDE SEQUENCE [LARGE SCALE GENOMIC DNA]</scope>
    <source>
        <strain>FSC 198</strain>
    </source>
</reference>
<gene>
    <name evidence="1" type="primary">clpP</name>
    <name type="ordered locus">FTF0624</name>
</gene>
<accession>Q14IJ9</accession>
<sequence>MITNNLVPTVIEKTAGGERAFDIYSRLLKERIVFLNGEVNDHSANLVIAQLLFLESEDPDKDIYFYINSPGGMVTAGMGVYDTMQFIKPDVSTICIGLAASMGSLLLAGGAKGKRYSLPSSQIMIHQPLGGFRGQASDIEIHAKNILRIKDRLNKVLAHHTGQDLETIVKDTDRDNFMMADEAKAYGLIDHVIESREAIIK</sequence>
<comment type="function">
    <text evidence="1">Cleaves peptides in various proteins in a process that requires ATP hydrolysis. Has a chymotrypsin-like activity. Plays a major role in the degradation of misfolded proteins.</text>
</comment>
<comment type="catalytic activity">
    <reaction evidence="1">
        <text>Hydrolysis of proteins to small peptides in the presence of ATP and magnesium. alpha-casein is the usual test substrate. In the absence of ATP, only oligopeptides shorter than five residues are hydrolyzed (such as succinyl-Leu-Tyr-|-NHMec, and Leu-Tyr-Leu-|-Tyr-Trp, in which cleavage of the -Tyr-|-Leu- and -Tyr-|-Trp bonds also occurs).</text>
        <dbReference type="EC" id="3.4.21.92"/>
    </reaction>
</comment>
<comment type="subunit">
    <text evidence="1">Fourteen ClpP subunits assemble into 2 heptameric rings which stack back to back to give a disk-like structure with a central cavity, resembling the structure of eukaryotic proteasomes.</text>
</comment>
<comment type="subcellular location">
    <subcellularLocation>
        <location evidence="1">Cytoplasm</location>
    </subcellularLocation>
</comment>
<comment type="similarity">
    <text evidence="1">Belongs to the peptidase S14 family.</text>
</comment>
<name>CLPP_FRAT1</name>
<dbReference type="EC" id="3.4.21.92" evidence="1"/>
<dbReference type="EMBL" id="AM286280">
    <property type="protein sequence ID" value="CAL08640.1"/>
    <property type="molecule type" value="Genomic_DNA"/>
</dbReference>
<dbReference type="RefSeq" id="WP_003015534.1">
    <property type="nucleotide sequence ID" value="NC_008245.1"/>
</dbReference>
<dbReference type="SMR" id="Q14IJ9"/>
<dbReference type="MEROPS" id="S14.001"/>
<dbReference type="GeneID" id="75265209"/>
<dbReference type="KEGG" id="ftf:FTF0624"/>
<dbReference type="HOGENOM" id="CLU_058707_3_2_6"/>
<dbReference type="GO" id="GO:0005737">
    <property type="term" value="C:cytoplasm"/>
    <property type="evidence" value="ECO:0007669"/>
    <property type="project" value="UniProtKB-SubCell"/>
</dbReference>
<dbReference type="GO" id="GO:0009368">
    <property type="term" value="C:endopeptidase Clp complex"/>
    <property type="evidence" value="ECO:0007669"/>
    <property type="project" value="TreeGrafter"/>
</dbReference>
<dbReference type="GO" id="GO:0004176">
    <property type="term" value="F:ATP-dependent peptidase activity"/>
    <property type="evidence" value="ECO:0007669"/>
    <property type="project" value="InterPro"/>
</dbReference>
<dbReference type="GO" id="GO:0051117">
    <property type="term" value="F:ATPase binding"/>
    <property type="evidence" value="ECO:0007669"/>
    <property type="project" value="TreeGrafter"/>
</dbReference>
<dbReference type="GO" id="GO:0004252">
    <property type="term" value="F:serine-type endopeptidase activity"/>
    <property type="evidence" value="ECO:0007669"/>
    <property type="project" value="UniProtKB-UniRule"/>
</dbReference>
<dbReference type="GO" id="GO:0006515">
    <property type="term" value="P:protein quality control for misfolded or incompletely synthesized proteins"/>
    <property type="evidence" value="ECO:0007669"/>
    <property type="project" value="TreeGrafter"/>
</dbReference>
<dbReference type="CDD" id="cd07017">
    <property type="entry name" value="S14_ClpP_2"/>
    <property type="match status" value="1"/>
</dbReference>
<dbReference type="FunFam" id="3.90.226.10:FF:000001">
    <property type="entry name" value="ATP-dependent Clp protease proteolytic subunit"/>
    <property type="match status" value="1"/>
</dbReference>
<dbReference type="Gene3D" id="3.90.226.10">
    <property type="entry name" value="2-enoyl-CoA Hydratase, Chain A, domain 1"/>
    <property type="match status" value="1"/>
</dbReference>
<dbReference type="HAMAP" id="MF_00444">
    <property type="entry name" value="ClpP"/>
    <property type="match status" value="1"/>
</dbReference>
<dbReference type="InterPro" id="IPR001907">
    <property type="entry name" value="ClpP"/>
</dbReference>
<dbReference type="InterPro" id="IPR029045">
    <property type="entry name" value="ClpP/crotonase-like_dom_sf"/>
</dbReference>
<dbReference type="InterPro" id="IPR023562">
    <property type="entry name" value="ClpP/TepA"/>
</dbReference>
<dbReference type="InterPro" id="IPR033135">
    <property type="entry name" value="ClpP_His_AS"/>
</dbReference>
<dbReference type="InterPro" id="IPR018215">
    <property type="entry name" value="ClpP_Ser_AS"/>
</dbReference>
<dbReference type="NCBIfam" id="TIGR00493">
    <property type="entry name" value="clpP"/>
    <property type="match status" value="1"/>
</dbReference>
<dbReference type="NCBIfam" id="NF001368">
    <property type="entry name" value="PRK00277.1"/>
    <property type="match status" value="1"/>
</dbReference>
<dbReference type="NCBIfam" id="NF009205">
    <property type="entry name" value="PRK12553.1"/>
    <property type="match status" value="1"/>
</dbReference>
<dbReference type="PANTHER" id="PTHR10381">
    <property type="entry name" value="ATP-DEPENDENT CLP PROTEASE PROTEOLYTIC SUBUNIT"/>
    <property type="match status" value="1"/>
</dbReference>
<dbReference type="PANTHER" id="PTHR10381:SF70">
    <property type="entry name" value="ATP-DEPENDENT CLP PROTEASE PROTEOLYTIC SUBUNIT"/>
    <property type="match status" value="1"/>
</dbReference>
<dbReference type="Pfam" id="PF00574">
    <property type="entry name" value="CLP_protease"/>
    <property type="match status" value="1"/>
</dbReference>
<dbReference type="PRINTS" id="PR00127">
    <property type="entry name" value="CLPPROTEASEP"/>
</dbReference>
<dbReference type="SUPFAM" id="SSF52096">
    <property type="entry name" value="ClpP/crotonase"/>
    <property type="match status" value="1"/>
</dbReference>
<dbReference type="PROSITE" id="PS00382">
    <property type="entry name" value="CLP_PROTEASE_HIS"/>
    <property type="match status" value="1"/>
</dbReference>
<dbReference type="PROSITE" id="PS00381">
    <property type="entry name" value="CLP_PROTEASE_SER"/>
    <property type="match status" value="1"/>
</dbReference>
<feature type="chain" id="PRO_1000026091" description="ATP-dependent Clp protease proteolytic subunit">
    <location>
        <begin position="1"/>
        <end position="201"/>
    </location>
</feature>
<feature type="active site" description="Nucleophile" evidence="1">
    <location>
        <position position="101"/>
    </location>
</feature>
<feature type="active site" evidence="1">
    <location>
        <position position="126"/>
    </location>
</feature>
<keyword id="KW-0963">Cytoplasm</keyword>
<keyword id="KW-0378">Hydrolase</keyword>
<keyword id="KW-0645">Protease</keyword>
<keyword id="KW-0720">Serine protease</keyword>
<protein>
    <recommendedName>
        <fullName evidence="1">ATP-dependent Clp protease proteolytic subunit</fullName>
        <ecNumber evidence="1">3.4.21.92</ecNumber>
    </recommendedName>
    <alternativeName>
        <fullName evidence="1">Endopeptidase Clp</fullName>
    </alternativeName>
</protein>
<organism>
    <name type="scientific">Francisella tularensis subsp. tularensis (strain FSC 198)</name>
    <dbReference type="NCBI Taxonomy" id="393115"/>
    <lineage>
        <taxon>Bacteria</taxon>
        <taxon>Pseudomonadati</taxon>
        <taxon>Pseudomonadota</taxon>
        <taxon>Gammaproteobacteria</taxon>
        <taxon>Thiotrichales</taxon>
        <taxon>Francisellaceae</taxon>
        <taxon>Francisella</taxon>
    </lineage>
</organism>
<proteinExistence type="inferred from homology"/>